<gene>
    <name type="primary">REN</name>
</gene>
<accession>P52115</accession>
<evidence type="ECO:0000250" key="1">
    <source>
        <dbReference type="UniProtKB" id="P00797"/>
    </source>
</evidence>
<evidence type="ECO:0000255" key="2"/>
<evidence type="ECO:0000255" key="3">
    <source>
        <dbReference type="PROSITE-ProRule" id="PRU01103"/>
    </source>
</evidence>
<evidence type="ECO:0000255" key="4">
    <source>
        <dbReference type="PROSITE-ProRule" id="PRU10094"/>
    </source>
</evidence>
<evidence type="ECO:0000269" key="5">
    <source>
    </source>
</evidence>
<evidence type="ECO:0000303" key="6">
    <source>
    </source>
</evidence>
<evidence type="ECO:0000305" key="7"/>
<reference key="1">
    <citation type="journal article" date="1992" name="J. Mol. Endocrinol.">
        <title>The sequence and tissue expression of ovine renin.</title>
        <authorList>
            <person name="Aldred G.P."/>
            <person name="Fu P."/>
            <person name="Crawford R.J."/>
            <person name="Fernley R.T."/>
        </authorList>
    </citation>
    <scope>NUCLEOTIDE SEQUENCE [MRNA]</scope>
    <source>
        <strain>Merino</strain>
        <tissue>Kidney</tissue>
    </source>
</reference>
<keyword id="KW-0064">Aspartyl protease</keyword>
<keyword id="KW-1015">Disulfide bond</keyword>
<keyword id="KW-0325">Glycoprotein</keyword>
<keyword id="KW-0378">Hydrolase</keyword>
<keyword id="KW-0472">Membrane</keyword>
<keyword id="KW-0645">Protease</keyword>
<keyword id="KW-1185">Reference proteome</keyword>
<keyword id="KW-0964">Secreted</keyword>
<keyword id="KW-0732">Signal</keyword>
<keyword id="KW-0865">Zymogen</keyword>
<proteinExistence type="evidence at transcript level"/>
<sequence length="400" mass="44016">MPLWGLLLALWGCSTFSLPADTAAFRRIFLKKMPSVRESLKERGVDMAQLGAEWSQLTKTLSFGNRTSPVVLTNYLDTQYYGEIGIGTPPQTFKVIFDTGSANLWVPSTKCSPLYTACEIHSLYDSLESSSYVENGTEFTIYYGSGKVKGFLSQDLVTVGGITVTQTFGEVTELPLRPFMLAKFDGVLGMGFPAQAVGGVTPVFDHILAQRVLTEDVFSVYYSRDSKNSHLLGGEIVLGGSDPQYYQENFHYVSISKPGSWQIRMKGVSVRSTTLLCEEGCMVVVDTGASYISGPTSSLRLLMEALGAKELSIDEYVVNCNQMPTLPDISFHLGGKAYTLTSADYVLQDPYNNISCTLALHGMDIPPPTGPVWVLGATFIRKFYTEFDRRNNRIGFALAR</sequence>
<organism>
    <name type="scientific">Ovis aries</name>
    <name type="common">Sheep</name>
    <dbReference type="NCBI Taxonomy" id="9940"/>
    <lineage>
        <taxon>Eukaryota</taxon>
        <taxon>Metazoa</taxon>
        <taxon>Chordata</taxon>
        <taxon>Craniata</taxon>
        <taxon>Vertebrata</taxon>
        <taxon>Euteleostomi</taxon>
        <taxon>Mammalia</taxon>
        <taxon>Eutheria</taxon>
        <taxon>Laurasiatheria</taxon>
        <taxon>Artiodactyla</taxon>
        <taxon>Ruminantia</taxon>
        <taxon>Pecora</taxon>
        <taxon>Bovidae</taxon>
        <taxon>Caprinae</taxon>
        <taxon>Ovis</taxon>
    </lineage>
</organism>
<comment type="function">
    <text evidence="1">Renin is a highly specific endopeptidase, whose only known function is to generate angiotensin I from angiotensinogen in the plasma, initiating a cascade of reactions that produce an elevation of blood pressure and increased sodium retention by the kidney.</text>
</comment>
<comment type="catalytic activity">
    <reaction evidence="1">
        <text>Cleavage of Leu-|-Xaa bond in angiotensinogen to generate angiotensin I.</text>
        <dbReference type="EC" id="3.4.23.15"/>
    </reaction>
</comment>
<comment type="activity regulation">
    <text evidence="1">Interaction with ATP6AP2 results in a 5-fold increased efficiency in angiotensinogen processing.</text>
</comment>
<comment type="subunit">
    <text evidence="1">Interacts with ATP6AP2.</text>
</comment>
<comment type="subcellular location">
    <subcellularLocation>
        <location evidence="1">Secreted</location>
    </subcellularLocation>
    <subcellularLocation>
        <location evidence="1">Membrane</location>
    </subcellularLocation>
    <text evidence="1">Associated to membranes via binding to ATP6AP2.</text>
</comment>
<comment type="tissue specificity">
    <text evidence="5">Kidney.</text>
</comment>
<comment type="similarity">
    <text evidence="7">Belongs to the peptidase A1 family.</text>
</comment>
<name>RENI_SHEEP</name>
<feature type="signal peptide" evidence="2">
    <location>
        <begin position="1"/>
        <end position="17"/>
    </location>
</feature>
<feature type="propeptide" id="PRO_0000026093" description="Activation peptide" evidence="1">
    <location>
        <begin position="18"/>
        <end position="59"/>
    </location>
</feature>
<feature type="chain" id="PRO_0000026094" description="Renin">
    <location>
        <begin position="60"/>
        <end position="400"/>
    </location>
</feature>
<feature type="domain" description="Peptidase A1" evidence="3">
    <location>
        <begin position="80"/>
        <end position="397"/>
    </location>
</feature>
<feature type="active site" evidence="4">
    <location>
        <position position="98"/>
    </location>
</feature>
<feature type="active site" evidence="4">
    <location>
        <position position="286"/>
    </location>
</feature>
<feature type="glycosylation site" description="N-linked (GlcNAc...) asparagine" evidence="2">
    <location>
        <position position="65"/>
    </location>
</feature>
<feature type="glycosylation site" description="N-linked (GlcNAc...) asparagine" evidence="2">
    <location>
        <position position="135"/>
    </location>
</feature>
<feature type="glycosylation site" description="N-linked (GlcNAc...) asparagine" evidence="2">
    <location>
        <position position="353"/>
    </location>
</feature>
<feature type="disulfide bond" evidence="1">
    <location>
        <begin position="111"/>
        <end position="118"/>
    </location>
</feature>
<feature type="disulfide bond" evidence="1">
    <location>
        <begin position="277"/>
        <end position="281"/>
    </location>
</feature>
<feature type="disulfide bond" evidence="1">
    <location>
        <begin position="320"/>
        <end position="356"/>
    </location>
</feature>
<dbReference type="EC" id="3.4.23.15" evidence="1"/>
<dbReference type="EMBL" id="L43524">
    <property type="protein sequence ID" value="AAA69809.1"/>
    <property type="molecule type" value="mRNA"/>
</dbReference>
<dbReference type="PIR" id="I47099">
    <property type="entry name" value="I47099"/>
</dbReference>
<dbReference type="RefSeq" id="NP_001009299.1">
    <property type="nucleotide sequence ID" value="NM_001009299.1"/>
</dbReference>
<dbReference type="SMR" id="P52115"/>
<dbReference type="STRING" id="9940.ENSOARP00000002426"/>
<dbReference type="MEROPS" id="A01.008"/>
<dbReference type="GlyCosmos" id="P52115">
    <property type="glycosylation" value="3 sites, No reported glycans"/>
</dbReference>
<dbReference type="PaxDb" id="9940-ENSOARP00000002426"/>
<dbReference type="GeneID" id="443310"/>
<dbReference type="KEGG" id="oas:443310"/>
<dbReference type="CTD" id="5972"/>
<dbReference type="eggNOG" id="KOG1339">
    <property type="taxonomic scope" value="Eukaryota"/>
</dbReference>
<dbReference type="OrthoDB" id="771136at2759"/>
<dbReference type="Proteomes" id="UP000002356">
    <property type="component" value="Unplaced"/>
</dbReference>
<dbReference type="GO" id="GO:0005615">
    <property type="term" value="C:extracellular space"/>
    <property type="evidence" value="ECO:0007669"/>
    <property type="project" value="UniProtKB-ARBA"/>
</dbReference>
<dbReference type="GO" id="GO:0016020">
    <property type="term" value="C:membrane"/>
    <property type="evidence" value="ECO:0007669"/>
    <property type="project" value="UniProtKB-SubCell"/>
</dbReference>
<dbReference type="GO" id="GO:0004190">
    <property type="term" value="F:aspartic-type endopeptidase activity"/>
    <property type="evidence" value="ECO:0007669"/>
    <property type="project" value="UniProtKB-KW"/>
</dbReference>
<dbReference type="GO" id="GO:0002003">
    <property type="term" value="P:angiotensin maturation"/>
    <property type="evidence" value="ECO:0007669"/>
    <property type="project" value="TreeGrafter"/>
</dbReference>
<dbReference type="CDD" id="cd05487">
    <property type="entry name" value="renin_like"/>
    <property type="match status" value="1"/>
</dbReference>
<dbReference type="FunFam" id="2.40.70.10:FF:000037">
    <property type="entry name" value="Renin"/>
    <property type="match status" value="1"/>
</dbReference>
<dbReference type="FunFam" id="2.40.70.10:FF:000032">
    <property type="entry name" value="renin"/>
    <property type="match status" value="1"/>
</dbReference>
<dbReference type="Gene3D" id="2.40.70.10">
    <property type="entry name" value="Acid Proteases"/>
    <property type="match status" value="2"/>
</dbReference>
<dbReference type="InterPro" id="IPR001461">
    <property type="entry name" value="Aspartic_peptidase_A1"/>
</dbReference>
<dbReference type="InterPro" id="IPR001969">
    <property type="entry name" value="Aspartic_peptidase_AS"/>
</dbReference>
<dbReference type="InterPro" id="IPR012848">
    <property type="entry name" value="Aspartic_peptidase_N"/>
</dbReference>
<dbReference type="InterPro" id="IPR033121">
    <property type="entry name" value="PEPTIDASE_A1"/>
</dbReference>
<dbReference type="InterPro" id="IPR021109">
    <property type="entry name" value="Peptidase_aspartic_dom_sf"/>
</dbReference>
<dbReference type="InterPro" id="IPR034135">
    <property type="entry name" value="Renin-like_dom"/>
</dbReference>
<dbReference type="PANTHER" id="PTHR47966">
    <property type="entry name" value="BETA-SITE APP-CLEAVING ENZYME, ISOFORM A-RELATED"/>
    <property type="match status" value="1"/>
</dbReference>
<dbReference type="PANTHER" id="PTHR47966:SF24">
    <property type="entry name" value="RENIN"/>
    <property type="match status" value="1"/>
</dbReference>
<dbReference type="Pfam" id="PF07966">
    <property type="entry name" value="A1_Propeptide"/>
    <property type="match status" value="1"/>
</dbReference>
<dbReference type="Pfam" id="PF00026">
    <property type="entry name" value="Asp"/>
    <property type="match status" value="1"/>
</dbReference>
<dbReference type="PRINTS" id="PR00792">
    <property type="entry name" value="PEPSIN"/>
</dbReference>
<dbReference type="SUPFAM" id="SSF50630">
    <property type="entry name" value="Acid proteases"/>
    <property type="match status" value="1"/>
</dbReference>
<dbReference type="PROSITE" id="PS00141">
    <property type="entry name" value="ASP_PROTEASE"/>
    <property type="match status" value="2"/>
</dbReference>
<dbReference type="PROSITE" id="PS51767">
    <property type="entry name" value="PEPTIDASE_A1"/>
    <property type="match status" value="1"/>
</dbReference>
<protein>
    <recommendedName>
        <fullName evidence="6">Renin</fullName>
        <ecNumber evidence="1">3.4.23.15</ecNumber>
    </recommendedName>
    <alternativeName>
        <fullName>Angiotensinogenase</fullName>
    </alternativeName>
</protein>